<sequence length="235" mass="26838">FITMNFVVEAASSNANQAITSENSIKPKGKLQPQMEKYTLTYFNGRGRAEVIRLLFALANVSYEDNRITRDEWKYLKPRTPFGHVPMLNVSGNVLGESHAIELLLGGRFGLLGTNDWEEAKIMAVVLNIDELFQKLIPWTHEKNTTKKAELFRNLSESDVMPFLGRYEKFLKESTTGHIVGNKVSVADLTVFNMLMTLDDEVKLEEYPQLASFVNKIGQMPGIKEWIKKRPKTYF</sequence>
<gene>
    <name type="primary">GST1</name>
    <name type="synonym">GSTA</name>
</gene>
<feature type="chain" id="PRO_0000185969" description="Glutathione S-transferase 1">
    <location>
        <begin position="1" status="less than"/>
        <end position="235"/>
    </location>
</feature>
<feature type="domain" description="GST N-terminal">
    <location>
        <begin position="36"/>
        <end position="113"/>
    </location>
</feature>
<feature type="domain" description="GST C-terminal">
    <location>
        <begin position="115"/>
        <end position="235"/>
    </location>
</feature>
<feature type="binding site" evidence="2">
    <location>
        <position position="42"/>
    </location>
    <ligand>
        <name>glutathione</name>
        <dbReference type="ChEBI" id="CHEBI:57925"/>
    </ligand>
</feature>
<feature type="binding site" evidence="2">
    <location>
        <position position="73"/>
    </location>
    <ligand>
        <name>glutathione</name>
        <dbReference type="ChEBI" id="CHEBI:57925"/>
    </ligand>
</feature>
<feature type="binding site" evidence="2">
    <location>
        <position position="77"/>
    </location>
    <ligand>
        <name>glutathione</name>
        <dbReference type="ChEBI" id="CHEBI:57925"/>
    </ligand>
</feature>
<feature type="binding site" evidence="2">
    <location>
        <position position="85"/>
    </location>
    <ligand>
        <name>glutathione</name>
        <dbReference type="ChEBI" id="CHEBI:57925"/>
    </ligand>
</feature>
<feature type="binding site">
    <location>
        <begin position="97"/>
        <end position="98"/>
    </location>
    <ligand>
        <name>glutathione</name>
        <dbReference type="ChEBI" id="CHEBI:57925"/>
    </ligand>
</feature>
<feature type="non-terminal residue">
    <location>
        <position position="1"/>
    </location>
</feature>
<feature type="strand" evidence="4">
    <location>
        <begin position="38"/>
        <end position="46"/>
    </location>
</feature>
<feature type="helix" evidence="4">
    <location>
        <begin position="47"/>
        <end position="49"/>
    </location>
</feature>
<feature type="helix" evidence="4">
    <location>
        <begin position="50"/>
        <end position="59"/>
    </location>
</feature>
<feature type="strand" evidence="4">
    <location>
        <begin position="64"/>
        <end position="68"/>
    </location>
</feature>
<feature type="helix" evidence="4">
    <location>
        <begin position="70"/>
        <end position="76"/>
    </location>
</feature>
<feature type="helix" evidence="4">
    <location>
        <begin position="77"/>
        <end position="79"/>
    </location>
</feature>
<feature type="strand" evidence="4">
    <location>
        <begin position="80"/>
        <end position="83"/>
    </location>
</feature>
<feature type="strand" evidence="4">
    <location>
        <begin position="87"/>
        <end position="90"/>
    </location>
</feature>
<feature type="strand" evidence="4">
    <location>
        <begin position="93"/>
        <end position="96"/>
    </location>
</feature>
<feature type="helix" evidence="4">
    <location>
        <begin position="98"/>
        <end position="108"/>
    </location>
</feature>
<feature type="helix" evidence="4">
    <location>
        <begin position="116"/>
        <end position="141"/>
    </location>
</feature>
<feature type="helix" evidence="4">
    <location>
        <begin position="145"/>
        <end position="156"/>
    </location>
</feature>
<feature type="turn" evidence="4">
    <location>
        <begin position="157"/>
        <end position="159"/>
    </location>
</feature>
<feature type="helix" evidence="4">
    <location>
        <begin position="160"/>
        <end position="172"/>
    </location>
</feature>
<feature type="strand" evidence="4">
    <location>
        <begin position="175"/>
        <end position="177"/>
    </location>
</feature>
<feature type="helix" evidence="4">
    <location>
        <begin position="186"/>
        <end position="197"/>
    </location>
</feature>
<feature type="helix" evidence="4">
    <location>
        <begin position="199"/>
        <end position="201"/>
    </location>
</feature>
<feature type="helix" evidence="4">
    <location>
        <begin position="204"/>
        <end position="206"/>
    </location>
</feature>
<feature type="helix" evidence="4">
    <location>
        <begin position="208"/>
        <end position="219"/>
    </location>
</feature>
<feature type="helix" evidence="4">
    <location>
        <begin position="223"/>
        <end position="229"/>
    </location>
</feature>
<keyword id="KW-0002">3D-structure</keyword>
<keyword id="KW-1185">Reference proteome</keyword>
<keyword id="KW-0808">Transferase</keyword>
<evidence type="ECO:0000250" key="1"/>
<evidence type="ECO:0000269" key="2">
    <source>
    </source>
</evidence>
<evidence type="ECO:0000305" key="3"/>
<evidence type="ECO:0007829" key="4">
    <source>
        <dbReference type="PDB" id="2HNL"/>
    </source>
</evidence>
<reference key="1">
    <citation type="journal article" date="1994" name="Mol. Biochem. Parasitol.">
        <title>Isolation, sequence and expression of an Onchocerca volvulus glutathione S-transferase cDNA.</title>
        <authorList>
            <person name="Liebau E."/>
            <person name="Walter R.D."/>
            <person name="Henkle-Duehrsen K."/>
        </authorList>
    </citation>
    <scope>NUCLEOTIDE SEQUENCE [MRNA]</scope>
</reference>
<reference key="2">
    <citation type="journal article" date="2008" name="J. Mol. Biol.">
        <title>Structure of the extracellular glutathione S-transferase OvGST1 from the human pathogenic parasite Onchocerca volvulus.</title>
        <authorList>
            <person name="Perbandt M."/>
            <person name="Hoppner J."/>
            <person name="Burmeister C."/>
            <person name="Luersen K."/>
            <person name="Betzel C."/>
            <person name="Liebau E."/>
        </authorList>
    </citation>
    <scope>X-RAY CRYSTALLOGRAPHY (2.0 ANGSTROMS) OF 11-235 IN COMPLEX WITH GLUTATHIONE</scope>
    <scope>SUBUNIT</scope>
</reference>
<protein>
    <recommendedName>
        <fullName>Glutathione S-transferase 1</fullName>
        <ecNumber>2.5.1.18</ecNumber>
    </recommendedName>
</protein>
<comment type="catalytic activity">
    <reaction>
        <text>RX + glutathione = an S-substituted glutathione + a halide anion + H(+)</text>
        <dbReference type="Rhea" id="RHEA:16437"/>
        <dbReference type="ChEBI" id="CHEBI:15378"/>
        <dbReference type="ChEBI" id="CHEBI:16042"/>
        <dbReference type="ChEBI" id="CHEBI:17792"/>
        <dbReference type="ChEBI" id="CHEBI:57925"/>
        <dbReference type="ChEBI" id="CHEBI:90779"/>
        <dbReference type="EC" id="2.5.1.18"/>
    </reaction>
</comment>
<comment type="subunit">
    <text evidence="1">Homodimer.</text>
</comment>
<comment type="similarity">
    <text evidence="3">Belongs to the GST superfamily.</text>
</comment>
<organism>
    <name type="scientific">Onchocerca volvulus</name>
    <dbReference type="NCBI Taxonomy" id="6282"/>
    <lineage>
        <taxon>Eukaryota</taxon>
        <taxon>Metazoa</taxon>
        <taxon>Ecdysozoa</taxon>
        <taxon>Nematoda</taxon>
        <taxon>Chromadorea</taxon>
        <taxon>Rhabditida</taxon>
        <taxon>Spirurina</taxon>
        <taxon>Spiruromorpha</taxon>
        <taxon>Filarioidea</taxon>
        <taxon>Onchocercidae</taxon>
        <taxon>Onchocerca</taxon>
    </lineage>
</organism>
<accession>P46434</accession>
<dbReference type="EC" id="2.5.1.18"/>
<dbReference type="EMBL" id="X75029">
    <property type="protein sequence ID" value="CAA52937.1"/>
    <property type="molecule type" value="mRNA"/>
</dbReference>
<dbReference type="PDB" id="2HNL">
    <property type="method" value="X-ray"/>
    <property type="resolution" value="2.00 A"/>
    <property type="chains" value="A/B=11-235"/>
</dbReference>
<dbReference type="PDBsum" id="2HNL"/>
<dbReference type="SMR" id="P46434"/>
<dbReference type="STRING" id="6282.P46434"/>
<dbReference type="HOGENOM" id="CLU_039475_1_2_1"/>
<dbReference type="EvolutionaryTrace" id="P46434"/>
<dbReference type="Proteomes" id="UP000024404">
    <property type="component" value="Unassembled WGS sequence"/>
</dbReference>
<dbReference type="GO" id="GO:0004364">
    <property type="term" value="F:glutathione transferase activity"/>
    <property type="evidence" value="ECO:0007669"/>
    <property type="project" value="UniProtKB-EC"/>
</dbReference>
<dbReference type="GO" id="GO:0006749">
    <property type="term" value="P:glutathione metabolic process"/>
    <property type="evidence" value="ECO:0007669"/>
    <property type="project" value="TreeGrafter"/>
</dbReference>
<dbReference type="CDD" id="cd03192">
    <property type="entry name" value="GST_C_Sigma_like"/>
    <property type="match status" value="1"/>
</dbReference>
<dbReference type="CDD" id="cd03039">
    <property type="entry name" value="GST_N_Sigma_like"/>
    <property type="match status" value="1"/>
</dbReference>
<dbReference type="FunFam" id="1.20.1050.10:FF:000030">
    <property type="entry name" value="Glutathione S-transferase S1"/>
    <property type="match status" value="1"/>
</dbReference>
<dbReference type="FunFam" id="3.40.30.10:FF:000035">
    <property type="entry name" value="hematopoietic prostaglandin D synthase"/>
    <property type="match status" value="1"/>
</dbReference>
<dbReference type="Gene3D" id="1.20.1050.10">
    <property type="match status" value="1"/>
</dbReference>
<dbReference type="Gene3D" id="3.40.30.10">
    <property type="entry name" value="Glutaredoxin"/>
    <property type="match status" value="1"/>
</dbReference>
<dbReference type="InterPro" id="IPR010987">
    <property type="entry name" value="Glutathione-S-Trfase_C-like"/>
</dbReference>
<dbReference type="InterPro" id="IPR036282">
    <property type="entry name" value="Glutathione-S-Trfase_C_sf"/>
</dbReference>
<dbReference type="InterPro" id="IPR040079">
    <property type="entry name" value="Glutathione_S-Trfase"/>
</dbReference>
<dbReference type="InterPro" id="IPR004045">
    <property type="entry name" value="Glutathione_S-Trfase_N"/>
</dbReference>
<dbReference type="InterPro" id="IPR004046">
    <property type="entry name" value="GST_C"/>
</dbReference>
<dbReference type="InterPro" id="IPR050213">
    <property type="entry name" value="GST_superfamily"/>
</dbReference>
<dbReference type="InterPro" id="IPR036249">
    <property type="entry name" value="Thioredoxin-like_sf"/>
</dbReference>
<dbReference type="PANTHER" id="PTHR11571">
    <property type="entry name" value="GLUTATHIONE S-TRANSFERASE"/>
    <property type="match status" value="1"/>
</dbReference>
<dbReference type="PANTHER" id="PTHR11571:SF150">
    <property type="entry name" value="GLUTATHIONE S-TRANSFERASE"/>
    <property type="match status" value="1"/>
</dbReference>
<dbReference type="Pfam" id="PF14497">
    <property type="entry name" value="GST_C_3"/>
    <property type="match status" value="1"/>
</dbReference>
<dbReference type="Pfam" id="PF02798">
    <property type="entry name" value="GST_N"/>
    <property type="match status" value="1"/>
</dbReference>
<dbReference type="SFLD" id="SFLDG01205">
    <property type="entry name" value="AMPS.1"/>
    <property type="match status" value="1"/>
</dbReference>
<dbReference type="SFLD" id="SFLDS00019">
    <property type="entry name" value="Glutathione_Transferase_(cytos"/>
    <property type="match status" value="1"/>
</dbReference>
<dbReference type="SUPFAM" id="SSF47616">
    <property type="entry name" value="GST C-terminal domain-like"/>
    <property type="match status" value="1"/>
</dbReference>
<dbReference type="SUPFAM" id="SSF52833">
    <property type="entry name" value="Thioredoxin-like"/>
    <property type="match status" value="1"/>
</dbReference>
<dbReference type="PROSITE" id="PS50405">
    <property type="entry name" value="GST_CTER"/>
    <property type="match status" value="1"/>
</dbReference>
<dbReference type="PROSITE" id="PS50404">
    <property type="entry name" value="GST_NTER"/>
    <property type="match status" value="1"/>
</dbReference>
<proteinExistence type="evidence at protein level"/>
<name>GST1_ONCVO</name>